<name>RL31B_STACT</name>
<reference key="1">
    <citation type="journal article" date="2009" name="Appl. Environ. Microbiol.">
        <title>Genome analysis of the meat starter culture bacterium Staphylococcus carnosus TM300.</title>
        <authorList>
            <person name="Rosenstein R."/>
            <person name="Nerz C."/>
            <person name="Biswas L."/>
            <person name="Resch A."/>
            <person name="Raddatz G."/>
            <person name="Schuster S.C."/>
            <person name="Goetz F."/>
        </authorList>
    </citation>
    <scope>NUCLEOTIDE SEQUENCE [LARGE SCALE GENOMIC DNA]</scope>
    <source>
        <strain>TM300</strain>
    </source>
</reference>
<dbReference type="EMBL" id="AM295250">
    <property type="protein sequence ID" value="CAL28529.1"/>
    <property type="molecule type" value="Genomic_DNA"/>
</dbReference>
<dbReference type="RefSeq" id="WP_015900869.1">
    <property type="nucleotide sequence ID" value="NC_012121.1"/>
</dbReference>
<dbReference type="SMR" id="B9DMD3"/>
<dbReference type="GeneID" id="93794077"/>
<dbReference type="KEGG" id="sca:SCA_1623"/>
<dbReference type="eggNOG" id="COG0254">
    <property type="taxonomic scope" value="Bacteria"/>
</dbReference>
<dbReference type="HOGENOM" id="CLU_114306_2_2_9"/>
<dbReference type="OrthoDB" id="9803251at2"/>
<dbReference type="BioCyc" id="SCAR396513:SCA_RS08245-MONOMER"/>
<dbReference type="Proteomes" id="UP000000444">
    <property type="component" value="Chromosome"/>
</dbReference>
<dbReference type="GO" id="GO:1990904">
    <property type="term" value="C:ribonucleoprotein complex"/>
    <property type="evidence" value="ECO:0007669"/>
    <property type="project" value="UniProtKB-KW"/>
</dbReference>
<dbReference type="GO" id="GO:0005840">
    <property type="term" value="C:ribosome"/>
    <property type="evidence" value="ECO:0007669"/>
    <property type="project" value="UniProtKB-KW"/>
</dbReference>
<dbReference type="GO" id="GO:0003735">
    <property type="term" value="F:structural constituent of ribosome"/>
    <property type="evidence" value="ECO:0007669"/>
    <property type="project" value="InterPro"/>
</dbReference>
<dbReference type="GO" id="GO:0006412">
    <property type="term" value="P:translation"/>
    <property type="evidence" value="ECO:0007669"/>
    <property type="project" value="UniProtKB-UniRule"/>
</dbReference>
<dbReference type="Gene3D" id="4.10.830.30">
    <property type="entry name" value="Ribosomal protein L31"/>
    <property type="match status" value="1"/>
</dbReference>
<dbReference type="HAMAP" id="MF_00502">
    <property type="entry name" value="Ribosomal_bL31_2"/>
    <property type="match status" value="1"/>
</dbReference>
<dbReference type="InterPro" id="IPR034704">
    <property type="entry name" value="Ribosomal_bL28/bL31-like_sf"/>
</dbReference>
<dbReference type="InterPro" id="IPR002150">
    <property type="entry name" value="Ribosomal_bL31"/>
</dbReference>
<dbReference type="InterPro" id="IPR027493">
    <property type="entry name" value="Ribosomal_bL31_B"/>
</dbReference>
<dbReference type="InterPro" id="IPR042105">
    <property type="entry name" value="Ribosomal_bL31_sf"/>
</dbReference>
<dbReference type="NCBIfam" id="TIGR00105">
    <property type="entry name" value="L31"/>
    <property type="match status" value="1"/>
</dbReference>
<dbReference type="NCBIfam" id="NF002462">
    <property type="entry name" value="PRK01678.1"/>
    <property type="match status" value="1"/>
</dbReference>
<dbReference type="PANTHER" id="PTHR33280">
    <property type="entry name" value="50S RIBOSOMAL PROTEIN L31, CHLOROPLASTIC"/>
    <property type="match status" value="1"/>
</dbReference>
<dbReference type="PANTHER" id="PTHR33280:SF1">
    <property type="entry name" value="LARGE RIBOSOMAL SUBUNIT PROTEIN BL31C"/>
    <property type="match status" value="1"/>
</dbReference>
<dbReference type="Pfam" id="PF01197">
    <property type="entry name" value="Ribosomal_L31"/>
    <property type="match status" value="1"/>
</dbReference>
<dbReference type="PRINTS" id="PR01249">
    <property type="entry name" value="RIBOSOMALL31"/>
</dbReference>
<dbReference type="SUPFAM" id="SSF143800">
    <property type="entry name" value="L28p-like"/>
    <property type="match status" value="1"/>
</dbReference>
<dbReference type="PROSITE" id="PS01143">
    <property type="entry name" value="RIBOSOMAL_L31"/>
    <property type="match status" value="1"/>
</dbReference>
<organism>
    <name type="scientific">Staphylococcus carnosus (strain TM300)</name>
    <dbReference type="NCBI Taxonomy" id="396513"/>
    <lineage>
        <taxon>Bacteria</taxon>
        <taxon>Bacillati</taxon>
        <taxon>Bacillota</taxon>
        <taxon>Bacilli</taxon>
        <taxon>Bacillales</taxon>
        <taxon>Staphylococcaceae</taxon>
        <taxon>Staphylococcus</taxon>
    </lineage>
</organism>
<feature type="chain" id="PRO_1000176992" description="Large ribosomal subunit protein bL31B">
    <location>
        <begin position="1"/>
        <end position="87"/>
    </location>
</feature>
<comment type="subunit">
    <text evidence="1">Part of the 50S ribosomal subunit.</text>
</comment>
<comment type="similarity">
    <text evidence="1">Belongs to the bacterial ribosomal protein bL31 family. Type B subfamily.</text>
</comment>
<proteinExistence type="inferred from homology"/>
<accession>B9DMD3</accession>
<protein>
    <recommendedName>
        <fullName evidence="1">Large ribosomal subunit protein bL31B</fullName>
    </recommendedName>
    <alternativeName>
        <fullName evidence="2">50S ribosomal protein L31 type B</fullName>
    </alternativeName>
</protein>
<sequence>MRQGIHPEYHKVIFLDTTTNFKFLSGSTKTSSETMEWEDGNEYPVIRLDISSDSHPFYTGRQKFAAADGRVERFNKKFGLKSSNDNE</sequence>
<evidence type="ECO:0000255" key="1">
    <source>
        <dbReference type="HAMAP-Rule" id="MF_00502"/>
    </source>
</evidence>
<evidence type="ECO:0000305" key="2"/>
<keyword id="KW-1185">Reference proteome</keyword>
<keyword id="KW-0687">Ribonucleoprotein</keyword>
<keyword id="KW-0689">Ribosomal protein</keyword>
<gene>
    <name evidence="1" type="primary">rpmE2</name>
    <name type="ordered locus">Sca_1623</name>
</gene>